<organism>
    <name type="scientific">Escherichia coli (strain UTI89 / UPEC)</name>
    <dbReference type="NCBI Taxonomy" id="364106"/>
    <lineage>
        <taxon>Bacteria</taxon>
        <taxon>Pseudomonadati</taxon>
        <taxon>Pseudomonadota</taxon>
        <taxon>Gammaproteobacteria</taxon>
        <taxon>Enterobacterales</taxon>
        <taxon>Enterobacteriaceae</taxon>
        <taxon>Escherichia</taxon>
    </lineage>
</organism>
<reference key="1">
    <citation type="journal article" date="2006" name="Proc. Natl. Acad. Sci. U.S.A.">
        <title>Identification of genes subject to positive selection in uropathogenic strains of Escherichia coli: a comparative genomics approach.</title>
        <authorList>
            <person name="Chen S.L."/>
            <person name="Hung C.-S."/>
            <person name="Xu J."/>
            <person name="Reigstad C.S."/>
            <person name="Magrini V."/>
            <person name="Sabo A."/>
            <person name="Blasiar D."/>
            <person name="Bieri T."/>
            <person name="Meyer R.R."/>
            <person name="Ozersky P."/>
            <person name="Armstrong J.R."/>
            <person name="Fulton R.S."/>
            <person name="Latreille J.P."/>
            <person name="Spieth J."/>
            <person name="Hooton T.M."/>
            <person name="Mardis E.R."/>
            <person name="Hultgren S.J."/>
            <person name="Gordon J.I."/>
        </authorList>
    </citation>
    <scope>NUCLEOTIDE SEQUENCE [LARGE SCALE GENOMIC DNA]</scope>
    <source>
        <strain>UTI89 / UPEC</strain>
    </source>
</reference>
<protein>
    <recommendedName>
        <fullName evidence="1">L-arabinose isomerase</fullName>
        <ecNumber evidence="1">5.3.1.4</ecNumber>
    </recommendedName>
</protein>
<comment type="function">
    <text evidence="1">Catalyzes the conversion of L-arabinose to L-ribulose.</text>
</comment>
<comment type="catalytic activity">
    <reaction evidence="1">
        <text>beta-L-arabinopyranose = L-ribulose</text>
        <dbReference type="Rhea" id="RHEA:14821"/>
        <dbReference type="ChEBI" id="CHEBI:16880"/>
        <dbReference type="ChEBI" id="CHEBI:40886"/>
        <dbReference type="EC" id="5.3.1.4"/>
    </reaction>
</comment>
<comment type="cofactor">
    <cofactor evidence="1">
        <name>Mn(2+)</name>
        <dbReference type="ChEBI" id="CHEBI:29035"/>
    </cofactor>
    <text evidence="1">Binds 1 Mn(2+) ion per subunit.</text>
</comment>
<comment type="pathway">
    <text evidence="1">Carbohydrate degradation; L-arabinose degradation via L-ribulose; D-xylulose 5-phosphate from L-arabinose (bacterial route): step 1/3.</text>
</comment>
<comment type="subunit">
    <text evidence="1">Homohexamer.</text>
</comment>
<comment type="similarity">
    <text evidence="1">Belongs to the arabinose isomerase family.</text>
</comment>
<evidence type="ECO:0000255" key="1">
    <source>
        <dbReference type="HAMAP-Rule" id="MF_00519"/>
    </source>
</evidence>
<feature type="chain" id="PRO_0000259337" description="L-arabinose isomerase">
    <location>
        <begin position="1"/>
        <end position="500"/>
    </location>
</feature>
<feature type="binding site" evidence="1">
    <location>
        <position position="306"/>
    </location>
    <ligand>
        <name>Mn(2+)</name>
        <dbReference type="ChEBI" id="CHEBI:29035"/>
    </ligand>
</feature>
<feature type="binding site" evidence="1">
    <location>
        <position position="333"/>
    </location>
    <ligand>
        <name>Mn(2+)</name>
        <dbReference type="ChEBI" id="CHEBI:29035"/>
    </ligand>
</feature>
<feature type="binding site" evidence="1">
    <location>
        <position position="350"/>
    </location>
    <ligand>
        <name>Mn(2+)</name>
        <dbReference type="ChEBI" id="CHEBI:29035"/>
    </ligand>
</feature>
<feature type="binding site" evidence="1">
    <location>
        <position position="450"/>
    </location>
    <ligand>
        <name>Mn(2+)</name>
        <dbReference type="ChEBI" id="CHEBI:29035"/>
    </ligand>
</feature>
<dbReference type="EC" id="5.3.1.4" evidence="1"/>
<dbReference type="EMBL" id="CP000243">
    <property type="protein sequence ID" value="ABE05577.1"/>
    <property type="molecule type" value="Genomic_DNA"/>
</dbReference>
<dbReference type="RefSeq" id="WP_000151734.1">
    <property type="nucleotide sequence ID" value="NZ_CP064825.1"/>
</dbReference>
<dbReference type="SMR" id="Q1RGD7"/>
<dbReference type="GeneID" id="93777375"/>
<dbReference type="KEGG" id="eci:UTI89_C0067"/>
<dbReference type="HOGENOM" id="CLU_045663_0_0_6"/>
<dbReference type="UniPathway" id="UPA00145">
    <property type="reaction ID" value="UER00565"/>
</dbReference>
<dbReference type="Proteomes" id="UP000001952">
    <property type="component" value="Chromosome"/>
</dbReference>
<dbReference type="GO" id="GO:0005829">
    <property type="term" value="C:cytosol"/>
    <property type="evidence" value="ECO:0007669"/>
    <property type="project" value="TreeGrafter"/>
</dbReference>
<dbReference type="GO" id="GO:0008733">
    <property type="term" value="F:L-arabinose isomerase activity"/>
    <property type="evidence" value="ECO:0007669"/>
    <property type="project" value="UniProtKB-UniRule"/>
</dbReference>
<dbReference type="GO" id="GO:0030145">
    <property type="term" value="F:manganese ion binding"/>
    <property type="evidence" value="ECO:0007669"/>
    <property type="project" value="UniProtKB-UniRule"/>
</dbReference>
<dbReference type="GO" id="GO:0019569">
    <property type="term" value="P:L-arabinose catabolic process to xylulose 5-phosphate"/>
    <property type="evidence" value="ECO:0007669"/>
    <property type="project" value="UniProtKB-UniRule"/>
</dbReference>
<dbReference type="CDD" id="cd03557">
    <property type="entry name" value="L-arabinose_isomerase"/>
    <property type="match status" value="1"/>
</dbReference>
<dbReference type="FunFam" id="3.40.50.10940:FF:000001">
    <property type="entry name" value="L-arabinose isomerase"/>
    <property type="match status" value="1"/>
</dbReference>
<dbReference type="Gene3D" id="3.40.50.10940">
    <property type="match status" value="1"/>
</dbReference>
<dbReference type="HAMAP" id="MF_00519">
    <property type="entry name" value="Arabinose_Isome"/>
    <property type="match status" value="1"/>
</dbReference>
<dbReference type="InterPro" id="IPR024664">
    <property type="entry name" value="Ara_Isoase_C"/>
</dbReference>
<dbReference type="InterPro" id="IPR055390">
    <property type="entry name" value="AraA_central"/>
</dbReference>
<dbReference type="InterPro" id="IPR055389">
    <property type="entry name" value="AraA_N"/>
</dbReference>
<dbReference type="InterPro" id="IPR038583">
    <property type="entry name" value="AraA_N_sf"/>
</dbReference>
<dbReference type="InterPro" id="IPR004216">
    <property type="entry name" value="Fuc/Ara_isomerase_C"/>
</dbReference>
<dbReference type="InterPro" id="IPR009015">
    <property type="entry name" value="Fucose_isomerase_N/cen_sf"/>
</dbReference>
<dbReference type="InterPro" id="IPR003762">
    <property type="entry name" value="Lara_isomerase"/>
</dbReference>
<dbReference type="NCBIfam" id="NF002795">
    <property type="entry name" value="PRK02929.1"/>
    <property type="match status" value="1"/>
</dbReference>
<dbReference type="PANTHER" id="PTHR38464">
    <property type="entry name" value="L-ARABINOSE ISOMERASE"/>
    <property type="match status" value="1"/>
</dbReference>
<dbReference type="PANTHER" id="PTHR38464:SF1">
    <property type="entry name" value="L-ARABINOSE ISOMERASE"/>
    <property type="match status" value="1"/>
</dbReference>
<dbReference type="Pfam" id="PF24856">
    <property type="entry name" value="AraA_central"/>
    <property type="match status" value="1"/>
</dbReference>
<dbReference type="Pfam" id="PF02610">
    <property type="entry name" value="AraA_N"/>
    <property type="match status" value="1"/>
</dbReference>
<dbReference type="Pfam" id="PF11762">
    <property type="entry name" value="Arabinose_Iso_C"/>
    <property type="match status" value="1"/>
</dbReference>
<dbReference type="PIRSF" id="PIRSF001478">
    <property type="entry name" value="L-ara_isomerase"/>
    <property type="match status" value="1"/>
</dbReference>
<dbReference type="SUPFAM" id="SSF50443">
    <property type="entry name" value="FucI/AraA C-terminal domain-like"/>
    <property type="match status" value="1"/>
</dbReference>
<dbReference type="SUPFAM" id="SSF53743">
    <property type="entry name" value="FucI/AraA N-terminal and middle domains"/>
    <property type="match status" value="1"/>
</dbReference>
<proteinExistence type="inferred from homology"/>
<accession>Q1RGD7</accession>
<sequence>MTIFDNYEVWFVIGSQHLYGPETLRQVTQHAEHVVNALNTEAKLPCKLVLKPLGTTPDEITAICRDANYDDRCAGLVVWLHTFSPAKMWINGLTMLNKPLLQFHTQFNAALPWDSIDMDFMNLNQTAHGGREFGFIGARMRQQHAVVTGHWQDKQAHERIGSWMRQAVSKQDTRHLKVCRFGDNMREVAVTDGDKVAAQIKFGFSVNTWAVGDLVQVVNSISDGDVNALVDEYESCYTMTPATQIHGEKRQNVLEAARIELGMKRFLEQGGFHAFTTTFEDLHGLKQLPGLAVQRLMQQGYGFAGEGDWKTAALLRIMKVMSTGLQGGTSFMEDYTYHFEKGNDLVLGSHMLEVCPSIAVEEKPILDVQHLGIGGKDDPARLIFNTQTGPAIVASLIDLGDRYRLLVNCIDTVKTPHSLPKLPVANALWKAQPDLPTASEAWILAGGAHHTVFSHALNLNDMRQFAEMHDIEITVIDNDTRLPAFKDALRWNEVYYGFRR</sequence>
<keyword id="KW-0054">Arabinose catabolism</keyword>
<keyword id="KW-0119">Carbohydrate metabolism</keyword>
<keyword id="KW-0413">Isomerase</keyword>
<keyword id="KW-0464">Manganese</keyword>
<keyword id="KW-0479">Metal-binding</keyword>
<name>ARAA_ECOUT</name>
<gene>
    <name evidence="1" type="primary">araA</name>
    <name type="ordered locus">UTI89_C0067</name>
</gene>